<gene>
    <name type="primary">DEFB105A</name>
    <name type="synonym">DEFB105</name>
</gene>
<organism>
    <name type="scientific">Hylobates lar</name>
    <name type="common">Lar gibbon</name>
    <name type="synonym">White-handed gibbon</name>
    <dbReference type="NCBI Taxonomy" id="9580"/>
    <lineage>
        <taxon>Eukaryota</taxon>
        <taxon>Metazoa</taxon>
        <taxon>Chordata</taxon>
        <taxon>Craniata</taxon>
        <taxon>Vertebrata</taxon>
        <taxon>Euteleostomi</taxon>
        <taxon>Mammalia</taxon>
        <taxon>Eutheria</taxon>
        <taxon>Euarchontoglires</taxon>
        <taxon>Primates</taxon>
        <taxon>Haplorrhini</taxon>
        <taxon>Catarrhini</taxon>
        <taxon>Hylobatidae</taxon>
        <taxon>Hylobates</taxon>
    </lineage>
</organism>
<dbReference type="EMBL" id="AM410113">
    <property type="protein sequence ID" value="CAL68928.1"/>
    <property type="molecule type" value="Genomic_DNA"/>
</dbReference>
<dbReference type="SMR" id="A4H208"/>
<dbReference type="GO" id="GO:0005576">
    <property type="term" value="C:extracellular region"/>
    <property type="evidence" value="ECO:0007669"/>
    <property type="project" value="UniProtKB-SubCell"/>
</dbReference>
<dbReference type="GO" id="GO:0042742">
    <property type="term" value="P:defense response to bacterium"/>
    <property type="evidence" value="ECO:0007669"/>
    <property type="project" value="UniProtKB-KW"/>
</dbReference>
<dbReference type="GO" id="GO:0045087">
    <property type="term" value="P:innate immune response"/>
    <property type="evidence" value="ECO:0007669"/>
    <property type="project" value="InterPro"/>
</dbReference>
<dbReference type="InterPro" id="IPR025933">
    <property type="entry name" value="Beta_defensin_dom"/>
</dbReference>
<dbReference type="Pfam" id="PF13841">
    <property type="entry name" value="Defensin_beta_2"/>
    <property type="match status" value="1"/>
</dbReference>
<evidence type="ECO:0000250" key="1"/>
<evidence type="ECO:0000255" key="2"/>
<evidence type="ECO:0000305" key="3"/>
<protein>
    <recommendedName>
        <fullName>Beta-defensin 105A</fullName>
    </recommendedName>
    <alternativeName>
        <fullName>Defensin, beta 105</fullName>
    </alternativeName>
    <alternativeName>
        <fullName>Defensin, beta 105A</fullName>
    </alternativeName>
</protein>
<sequence length="78" mass="8929">MALIRKTFYFLFAVFFILVQLPSGCQAGLDFSQPFPSGEFAVFESCKFSRGKCRKECLENEKPDGNCRLNFLCCRQSI</sequence>
<name>D105A_HYLLA</name>
<proteinExistence type="inferred from homology"/>
<keyword id="KW-0044">Antibiotic</keyword>
<keyword id="KW-0929">Antimicrobial</keyword>
<keyword id="KW-0211">Defensin</keyword>
<keyword id="KW-1015">Disulfide bond</keyword>
<keyword id="KW-0964">Secreted</keyword>
<keyword id="KW-0732">Signal</keyword>
<accession>A4H208</accession>
<feature type="signal peptide" evidence="2">
    <location>
        <begin position="1"/>
        <end position="27"/>
    </location>
</feature>
<feature type="peptide" id="PRO_0000289812" description="Beta-defensin 105A">
    <location>
        <begin position="28"/>
        <end position="78"/>
    </location>
</feature>
<feature type="disulfide bond" evidence="1">
    <location>
        <begin position="46"/>
        <end position="74"/>
    </location>
</feature>
<feature type="disulfide bond" evidence="1">
    <location>
        <begin position="53"/>
        <end position="67"/>
    </location>
</feature>
<feature type="disulfide bond" evidence="1">
    <location>
        <begin position="57"/>
        <end position="73"/>
    </location>
</feature>
<comment type="function">
    <text evidence="1">Has antimicrobial activity.</text>
</comment>
<comment type="subcellular location">
    <subcellularLocation>
        <location evidence="1">Secreted</location>
    </subcellularLocation>
</comment>
<comment type="similarity">
    <text evidence="3">Belongs to the beta-defensin family.</text>
</comment>
<reference key="1">
    <citation type="submission" date="2006-11" db="EMBL/GenBank/DDBJ databases">
        <title>Evolution and sequence variation of human beta-defensin genes.</title>
        <authorList>
            <person name="Hollox E.J."/>
            <person name="Armour J.A.L."/>
        </authorList>
    </citation>
    <scope>NUCLEOTIDE SEQUENCE [GENOMIC DNA]</scope>
</reference>